<protein>
    <recommendedName>
        <fullName>Uncharacterized HTH-type transcriptional regulator Rv0023</fullName>
    </recommendedName>
</protein>
<evidence type="ECO:0000255" key="1">
    <source>
        <dbReference type="PROSITE-ProRule" id="PRU00257"/>
    </source>
</evidence>
<evidence type="ECO:0000269" key="2">
    <source>
    </source>
</evidence>
<proteinExistence type="evidence at protein level"/>
<name>Y023_MYCTU</name>
<dbReference type="EMBL" id="AL123456">
    <property type="protein sequence ID" value="CCP42745.1"/>
    <property type="molecule type" value="Genomic_DNA"/>
</dbReference>
<dbReference type="PIR" id="E70700">
    <property type="entry name" value="E70700"/>
</dbReference>
<dbReference type="RefSeq" id="NP_214537.1">
    <property type="nucleotide sequence ID" value="NC_000962.3"/>
</dbReference>
<dbReference type="RefSeq" id="WP_003400391.1">
    <property type="nucleotide sequence ID" value="NZ_NVQJ01000005.1"/>
</dbReference>
<dbReference type="SMR" id="P9WMI3"/>
<dbReference type="STRING" id="83332.Rv0023"/>
<dbReference type="PaxDb" id="83332-Rv0023"/>
<dbReference type="DNASU" id="887062"/>
<dbReference type="GeneID" id="887062"/>
<dbReference type="KEGG" id="mtu:Rv0023"/>
<dbReference type="KEGG" id="mtv:RVBD_0023"/>
<dbReference type="TubercuList" id="Rv0023"/>
<dbReference type="eggNOG" id="COG1396">
    <property type="taxonomic scope" value="Bacteria"/>
</dbReference>
<dbReference type="InParanoid" id="P9WMI3"/>
<dbReference type="OrthoDB" id="4743590at2"/>
<dbReference type="Proteomes" id="UP000001584">
    <property type="component" value="Chromosome"/>
</dbReference>
<dbReference type="GO" id="GO:0003677">
    <property type="term" value="F:DNA binding"/>
    <property type="evidence" value="ECO:0007669"/>
    <property type="project" value="UniProtKB-KW"/>
</dbReference>
<dbReference type="CDD" id="cd00093">
    <property type="entry name" value="HTH_XRE"/>
    <property type="match status" value="1"/>
</dbReference>
<dbReference type="Gene3D" id="1.10.260.40">
    <property type="entry name" value="lambda repressor-like DNA-binding domains"/>
    <property type="match status" value="1"/>
</dbReference>
<dbReference type="InterPro" id="IPR001387">
    <property type="entry name" value="Cro/C1-type_HTH"/>
</dbReference>
<dbReference type="InterPro" id="IPR010982">
    <property type="entry name" value="Lambda_DNA-bd_dom_sf"/>
</dbReference>
<dbReference type="Pfam" id="PF01381">
    <property type="entry name" value="HTH_3"/>
    <property type="match status" value="1"/>
</dbReference>
<dbReference type="SMART" id="SM00530">
    <property type="entry name" value="HTH_XRE"/>
    <property type="match status" value="1"/>
</dbReference>
<dbReference type="SUPFAM" id="SSF47413">
    <property type="entry name" value="lambda repressor-like DNA-binding domains"/>
    <property type="match status" value="1"/>
</dbReference>
<dbReference type="PROSITE" id="PS50943">
    <property type="entry name" value="HTH_CROC1"/>
    <property type="match status" value="1"/>
</dbReference>
<feature type="chain" id="PRO_0000149772" description="Uncharacterized HTH-type transcriptional regulator Rv0023">
    <location>
        <begin position="1"/>
        <end position="256"/>
    </location>
</feature>
<feature type="domain" description="HTH cro/C1-type" evidence="1">
    <location>
        <begin position="10"/>
        <end position="64"/>
    </location>
</feature>
<feature type="DNA-binding region" description="H-T-H motif" evidence="1">
    <location>
        <begin position="21"/>
        <end position="40"/>
    </location>
</feature>
<gene>
    <name type="ordered locus">Rv0023</name>
    <name type="ORF">MTCY10H4.23</name>
</gene>
<keyword id="KW-0238">DNA-binding</keyword>
<keyword id="KW-1185">Reference proteome</keyword>
<keyword id="KW-0804">Transcription</keyword>
<keyword id="KW-0805">Transcription regulation</keyword>
<comment type="induction">
    <text evidence="2">Up-regulated 12-fold 7 days after infection of human macrophages.</text>
</comment>
<accession>P9WMI3</accession>
<accession>L0T2B8</accession>
<accession>P67704</accession>
<accession>P71593</accession>
<sequence length="256" mass="27188">MSRESAGAAIRALRESRDWSLADLAAATGVSTMGLSYLERGARKPHKSTVQKVENGLGLPPGTYSRLLVAADPDAELARLIAAQPSNPTAVRRAGAVVVDRHSDTDVLEGYAEAQLDAIKSVIDRLPATTSNEYETYILSVIAQCVKAEMLAASSWRVAVNAGADSTGRLMEHLRALEATRGALLERMPTSLSARFDRACAQSSLPEAVVAALIGVGADEMWDIRNRGVIPAGALPRVRAFVDAIEASHDADEGQQ</sequence>
<reference key="1">
    <citation type="journal article" date="1998" name="Nature">
        <title>Deciphering the biology of Mycobacterium tuberculosis from the complete genome sequence.</title>
        <authorList>
            <person name="Cole S.T."/>
            <person name="Brosch R."/>
            <person name="Parkhill J."/>
            <person name="Garnier T."/>
            <person name="Churcher C.M."/>
            <person name="Harris D.E."/>
            <person name="Gordon S.V."/>
            <person name="Eiglmeier K."/>
            <person name="Gas S."/>
            <person name="Barry C.E. III"/>
            <person name="Tekaia F."/>
            <person name="Badcock K."/>
            <person name="Basham D."/>
            <person name="Brown D."/>
            <person name="Chillingworth T."/>
            <person name="Connor R."/>
            <person name="Davies R.M."/>
            <person name="Devlin K."/>
            <person name="Feltwell T."/>
            <person name="Gentles S."/>
            <person name="Hamlin N."/>
            <person name="Holroyd S."/>
            <person name="Hornsby T."/>
            <person name="Jagels K."/>
            <person name="Krogh A."/>
            <person name="McLean J."/>
            <person name="Moule S."/>
            <person name="Murphy L.D."/>
            <person name="Oliver S."/>
            <person name="Osborne J."/>
            <person name="Quail M.A."/>
            <person name="Rajandream M.A."/>
            <person name="Rogers J."/>
            <person name="Rutter S."/>
            <person name="Seeger K."/>
            <person name="Skelton S."/>
            <person name="Squares S."/>
            <person name="Squares R."/>
            <person name="Sulston J.E."/>
            <person name="Taylor K."/>
            <person name="Whitehead S."/>
            <person name="Barrell B.G."/>
        </authorList>
    </citation>
    <scope>NUCLEOTIDE SEQUENCE [LARGE SCALE GENOMIC DNA]</scope>
    <source>
        <strain>ATCC 25618 / H37Rv</strain>
    </source>
</reference>
<reference key="2">
    <citation type="journal article" date="2006" name="Res. Microbiol.">
        <title>Profiling of Mycobacterium tuberculosis gene expression during human macrophage infection: upregulation of the alternative sigma factor G, a group of transcriptional regulators, and proteins with unknown function.</title>
        <authorList>
            <person name="Cappelli G."/>
            <person name="Volpe E."/>
            <person name="Grassi M."/>
            <person name="Liseo B."/>
            <person name="Colizzi V."/>
            <person name="Mariani F."/>
        </authorList>
    </citation>
    <scope>INDUCTION IN HUMAN MACROPHAGES</scope>
    <source>
        <strain>ATCC 25618 / H37Rv</strain>
    </source>
</reference>
<reference key="3">
    <citation type="journal article" date="2011" name="Mol. Cell. Proteomics">
        <title>Proteogenomic analysis of Mycobacterium tuberculosis by high resolution mass spectrometry.</title>
        <authorList>
            <person name="Kelkar D.S."/>
            <person name="Kumar D."/>
            <person name="Kumar P."/>
            <person name="Balakrishnan L."/>
            <person name="Muthusamy B."/>
            <person name="Yadav A.K."/>
            <person name="Shrivastava P."/>
            <person name="Marimuthu A."/>
            <person name="Anand S."/>
            <person name="Sundaram H."/>
            <person name="Kingsbury R."/>
            <person name="Harsha H.C."/>
            <person name="Nair B."/>
            <person name="Prasad T.S."/>
            <person name="Chauhan D.S."/>
            <person name="Katoch K."/>
            <person name="Katoch V.M."/>
            <person name="Kumar P."/>
            <person name="Chaerkady R."/>
            <person name="Ramachandran S."/>
            <person name="Dash D."/>
            <person name="Pandey A."/>
        </authorList>
    </citation>
    <scope>IDENTIFICATION BY MASS SPECTROMETRY [LARGE SCALE ANALYSIS]</scope>
    <source>
        <strain>ATCC 25618 / H37Rv</strain>
    </source>
</reference>
<organism>
    <name type="scientific">Mycobacterium tuberculosis (strain ATCC 25618 / H37Rv)</name>
    <dbReference type="NCBI Taxonomy" id="83332"/>
    <lineage>
        <taxon>Bacteria</taxon>
        <taxon>Bacillati</taxon>
        <taxon>Actinomycetota</taxon>
        <taxon>Actinomycetes</taxon>
        <taxon>Mycobacteriales</taxon>
        <taxon>Mycobacteriaceae</taxon>
        <taxon>Mycobacterium</taxon>
        <taxon>Mycobacterium tuberculosis complex</taxon>
    </lineage>
</organism>